<reference key="1">
    <citation type="journal article" date="1991" name="Virology">
        <title>Genome organization and nucleotide sequence of human papillomavirus type 39.</title>
        <authorList>
            <person name="Volpers C."/>
            <person name="Streeck R.E."/>
        </authorList>
    </citation>
    <scope>NUCLEOTIDE SEQUENCE [GENOMIC DNA]</scope>
</reference>
<protein>
    <recommendedName>
        <fullName evidence="1">Replication protein E1</fullName>
        <ecNumber evidence="1">5.6.2.4</ecNumber>
    </recommendedName>
    <alternativeName>
        <fullName evidence="1">ATP-dependent helicase E1</fullName>
    </alternativeName>
    <alternativeName>
        <fullName evidence="1">DNA 3'-5' helicase E1</fullName>
    </alternativeName>
</protein>
<organism>
    <name type="scientific">Human papillomavirus 39</name>
    <dbReference type="NCBI Taxonomy" id="10588"/>
    <lineage>
        <taxon>Viruses</taxon>
        <taxon>Monodnaviria</taxon>
        <taxon>Shotokuvirae</taxon>
        <taxon>Cossaviricota</taxon>
        <taxon>Papovaviricetes</taxon>
        <taxon>Zurhausenvirales</taxon>
        <taxon>Papillomaviridae</taxon>
        <taxon>Firstpapillomavirinae</taxon>
        <taxon>Alphapapillomavirus</taxon>
        <taxon>Alphapapillomavirus 7</taxon>
    </lineage>
</organism>
<gene>
    <name evidence="1" type="primary">E1</name>
</gene>
<proteinExistence type="inferred from homology"/>
<dbReference type="EC" id="5.6.2.4" evidence="1"/>
<dbReference type="EMBL" id="M62849">
    <property type="protein sequence ID" value="AAA47052.1"/>
    <property type="molecule type" value="Genomic_DNA"/>
</dbReference>
<dbReference type="PIR" id="C38502">
    <property type="entry name" value="W1WL39"/>
</dbReference>
<dbReference type="SMR" id="P24829"/>
<dbReference type="Proteomes" id="UP000009120">
    <property type="component" value="Genome"/>
</dbReference>
<dbReference type="GO" id="GO:0042025">
    <property type="term" value="C:host cell nucleus"/>
    <property type="evidence" value="ECO:0007669"/>
    <property type="project" value="UniProtKB-SubCell"/>
</dbReference>
<dbReference type="GO" id="GO:0005524">
    <property type="term" value="F:ATP binding"/>
    <property type="evidence" value="ECO:0007669"/>
    <property type="project" value="UniProtKB-UniRule"/>
</dbReference>
<dbReference type="GO" id="GO:0016887">
    <property type="term" value="F:ATP hydrolysis activity"/>
    <property type="evidence" value="ECO:0007669"/>
    <property type="project" value="RHEA"/>
</dbReference>
<dbReference type="GO" id="GO:0003677">
    <property type="term" value="F:DNA binding"/>
    <property type="evidence" value="ECO:0007669"/>
    <property type="project" value="UniProtKB-UniRule"/>
</dbReference>
<dbReference type="GO" id="GO:0003678">
    <property type="term" value="F:DNA helicase activity"/>
    <property type="evidence" value="ECO:0007669"/>
    <property type="project" value="UniProtKB-UniRule"/>
</dbReference>
<dbReference type="GO" id="GO:0006260">
    <property type="term" value="P:DNA replication"/>
    <property type="evidence" value="ECO:0007669"/>
    <property type="project" value="UniProtKB-UniRule"/>
</dbReference>
<dbReference type="Gene3D" id="3.40.1310.10">
    <property type="match status" value="1"/>
</dbReference>
<dbReference type="Gene3D" id="3.40.50.300">
    <property type="entry name" value="P-loop containing nucleotide triphosphate hydrolases"/>
    <property type="match status" value="1"/>
</dbReference>
<dbReference type="Gene3D" id="1.10.10.510">
    <property type="entry name" value="Zinc finger, large T-antigen D1 domain"/>
    <property type="match status" value="1"/>
</dbReference>
<dbReference type="HAMAP" id="MF_04000">
    <property type="entry name" value="PPV_E1"/>
    <property type="match status" value="1"/>
</dbReference>
<dbReference type="InterPro" id="IPR014015">
    <property type="entry name" value="Helicase_SF3_DNA-vir"/>
</dbReference>
<dbReference type="InterPro" id="IPR027417">
    <property type="entry name" value="P-loop_NTPase"/>
</dbReference>
<dbReference type="InterPro" id="IPR001177">
    <property type="entry name" value="PPV_DNA_helicase_E1_C"/>
</dbReference>
<dbReference type="InterPro" id="IPR014000">
    <property type="entry name" value="PPV_DNA_helicase_E1_N"/>
</dbReference>
<dbReference type="InterPro" id="IPR046832">
    <property type="entry name" value="PPV_E1_DBD"/>
</dbReference>
<dbReference type="InterPro" id="IPR046935">
    <property type="entry name" value="PPV_E1_DBD_sf"/>
</dbReference>
<dbReference type="InterPro" id="IPR016393">
    <property type="entry name" value="Rep_E1_papillomaV"/>
</dbReference>
<dbReference type="InterPro" id="IPR037102">
    <property type="entry name" value="Znf_lg_T-Ag_D1_dom_sf"/>
</dbReference>
<dbReference type="Pfam" id="PF00519">
    <property type="entry name" value="PPV_E1_C"/>
    <property type="match status" value="1"/>
</dbReference>
<dbReference type="Pfam" id="PF20450">
    <property type="entry name" value="PPV_E1_DBD"/>
    <property type="match status" value="1"/>
</dbReference>
<dbReference type="Pfam" id="PF00524">
    <property type="entry name" value="PPV_E1_N"/>
    <property type="match status" value="1"/>
</dbReference>
<dbReference type="PIRSF" id="PIRSF003383">
    <property type="entry name" value="Rep_E1_papillomaV"/>
    <property type="match status" value="1"/>
</dbReference>
<dbReference type="SUPFAM" id="SSF55464">
    <property type="entry name" value="Origin of replication-binding domain, RBD-like"/>
    <property type="match status" value="1"/>
</dbReference>
<dbReference type="SUPFAM" id="SSF52540">
    <property type="entry name" value="P-loop containing nucleoside triphosphate hydrolases"/>
    <property type="match status" value="1"/>
</dbReference>
<dbReference type="PROSITE" id="PS51206">
    <property type="entry name" value="SF3_HELICASE_1"/>
    <property type="match status" value="1"/>
</dbReference>
<keyword id="KW-0067">ATP-binding</keyword>
<keyword id="KW-0235">DNA replication</keyword>
<keyword id="KW-0238">DNA-binding</keyword>
<keyword id="KW-0244">Early protein</keyword>
<keyword id="KW-0347">Helicase</keyword>
<keyword id="KW-1048">Host nucleus</keyword>
<keyword id="KW-0378">Hydrolase</keyword>
<keyword id="KW-0413">Isomerase</keyword>
<keyword id="KW-1017">Isopeptide bond</keyword>
<keyword id="KW-0547">Nucleotide-binding</keyword>
<keyword id="KW-0597">Phosphoprotein</keyword>
<keyword id="KW-1185">Reference proteome</keyword>
<keyword id="KW-0832">Ubl conjugation</keyword>
<accession>P24829</accession>
<comment type="function">
    <text evidence="1">ATP-dependent DNA 3'-5' helicase required for initiation of viral DNA replication. It forms a complex with the viral E2 protein. The E1-E2 complex binds to the replication origin which contains binding sites for both proteins. During the initial step, a dimer of E1 interacts with a dimer of protein E2 leading to a complex that binds the viral origin of replication with high specificity. Then, a second dimer of E1 displaces the E2 dimer in an ATP-dependent manner to form the E1 tetramer. Following this, two E1 monomers are added to each half of the site, which results in the formation of two E1 trimers on the viral ori. Subsequently, two hexamers will be created. The double hexamer acts as a bi-directional helicase machinery and unwinds the viral DNA and then recruits the host DNA polymerase to start replication.</text>
</comment>
<comment type="catalytic activity">
    <reaction evidence="1">
        <text>Couples ATP hydrolysis with the unwinding of duplex DNA by translocating in the 3'-5' direction.</text>
        <dbReference type="EC" id="5.6.2.4"/>
    </reaction>
</comment>
<comment type="catalytic activity">
    <reaction evidence="1">
        <text>ATP + H2O = ADP + phosphate + H(+)</text>
        <dbReference type="Rhea" id="RHEA:13065"/>
        <dbReference type="ChEBI" id="CHEBI:15377"/>
        <dbReference type="ChEBI" id="CHEBI:15378"/>
        <dbReference type="ChEBI" id="CHEBI:30616"/>
        <dbReference type="ChEBI" id="CHEBI:43474"/>
        <dbReference type="ChEBI" id="CHEBI:456216"/>
        <dbReference type="EC" id="5.6.2.4"/>
    </reaction>
</comment>
<comment type="subunit">
    <text evidence="1">Can form hexamers. Interacts with E2 protein; this interaction increases E1 DNA binding specificity. Interacts with host DNA polymerase subunit POLA2. Interacts with host single stranded DNA-binding protein RPA1. Interacts with host TOP1; this interaction stimulates the enzymatic activity of TOP1.</text>
</comment>
<comment type="subcellular location">
    <subcellularLocation>
        <location evidence="1">Host nucleus</location>
    </subcellularLocation>
</comment>
<comment type="PTM">
    <text evidence="1">Phosphorylated.</text>
</comment>
<comment type="PTM">
    <text evidence="1">Sumoylated.</text>
</comment>
<comment type="similarity">
    <text evidence="1">Belongs to the papillomaviridae E1 protein family.</text>
</comment>
<name>VE1_HPV39</name>
<organismHost>
    <name type="scientific">Homo sapiens</name>
    <name type="common">Human</name>
    <dbReference type="NCBI Taxonomy" id="9606"/>
</organismHost>
<evidence type="ECO:0000255" key="1">
    <source>
        <dbReference type="HAMAP-Rule" id="MF_04000"/>
    </source>
</evidence>
<evidence type="ECO:0000256" key="2">
    <source>
        <dbReference type="SAM" id="MobiDB-lite"/>
    </source>
</evidence>
<feature type="chain" id="PRO_0000133137" description="Replication protein E1">
    <location>
        <begin position="1"/>
        <end position="647"/>
    </location>
</feature>
<feature type="domain" description="SF3 helicase" evidence="1">
    <location>
        <begin position="448"/>
        <end position="598"/>
    </location>
</feature>
<feature type="region of interest" description="Disordered" evidence="2">
    <location>
        <begin position="154"/>
        <end position="186"/>
    </location>
</feature>
<feature type="region of interest" description="DNA-binding region" evidence="1">
    <location>
        <begin position="183"/>
        <end position="349"/>
    </location>
</feature>
<feature type="short sequence motif" description="Nuclear localization signal" evidence="1">
    <location>
        <begin position="86"/>
        <end position="88"/>
    </location>
</feature>
<feature type="compositionally biased region" description="Basic and acidic residues" evidence="2">
    <location>
        <begin position="159"/>
        <end position="170"/>
    </location>
</feature>
<feature type="binding site" evidence="1">
    <location>
        <begin position="474"/>
        <end position="481"/>
    </location>
    <ligand>
        <name>ATP</name>
        <dbReference type="ChEBI" id="CHEBI:30616"/>
    </ligand>
</feature>
<feature type="modified residue" description="Phosphoserine; by host" evidence="1">
    <location>
        <position position="92"/>
    </location>
</feature>
<feature type="cross-link" description="Glycyl lysine isopeptide (Lys-Gly) (interchain with G-Cter in SUMO)" evidence="1">
    <location>
        <position position="555"/>
    </location>
</feature>
<sequence length="647" mass="72834">MANREGTDGDGSGCNGWFLVQAIVDKQTGDTVSEDEDENATDTGSDLADFIDDSTDICVQAERETAQVLLHMQEAQRDAQAVRALKRKYTDSSGDTRPYGKKVGRNTRGTLQEISLNVSSTQATQTVYSVPDSGYGNMEVETAEVEEVTVATNTNGDAEGEHGGSVREECSSVDSAIDSENQDPKSPTAQIKLLLQSNNKKAAMLTQFKETYGLSFTDLVRTFKSDKTTCTDWVAAIFGVHPTIAEGFKTLINKYALYTHIQSLDTKQGVLILMLIRYTCGKNRVTVGKGLSTLLHVPESCMLLEPPKLRSPVAALYWYRTGISNISVVTGDTPEWIQRLTVIQHGIDDSVFDLSDMVQWAFDNEYTDESDIAFNYAMLADCNSNAAAFLKSNCQAKYVKDCATMCKHYKRAQKRQMSMSQWIKFRCSKCDEGGDWRPIVQFLRYQGIEFISFLCALKEFLKGTPKKNCIVIYGPANTGKSHFCMSLMHFLQGTVISYVNSTSHFWLEPLADAKLAMLDDATGTCWSYFDNYMRNALDGYAISLDRKYKSLLQMKCPPLLITSNTNPVEDDRWPYLRSRLTVFKFPNAFPFDQNRNPVYTINDKNWKCFFEKTWCRLDLQQDEDEGDNDENTFTTFKCVTGQNTRIL</sequence>